<keyword id="KW-0131">Cell cycle</keyword>
<keyword id="KW-0963">Cytoplasm</keyword>
<keyword id="KW-0227">DNA damage</keyword>
<keyword id="KW-0233">DNA recombination</keyword>
<keyword id="KW-0234">DNA repair</keyword>
<keyword id="KW-0238">DNA-binding</keyword>
<keyword id="KW-0255">Endonuclease</keyword>
<keyword id="KW-0269">Exonuclease</keyword>
<keyword id="KW-0378">Hydrolase</keyword>
<keyword id="KW-1017">Isopeptide bond</keyword>
<keyword id="KW-0460">Magnesium</keyword>
<keyword id="KW-0479">Metal-binding</keyword>
<keyword id="KW-0496">Mitochondrion</keyword>
<keyword id="KW-0540">Nuclease</keyword>
<keyword id="KW-0539">Nucleus</keyword>
<keyword id="KW-1185">Reference proteome</keyword>
<keyword id="KW-0832">Ubl conjugation</keyword>
<keyword id="KW-0862">Zinc</keyword>
<keyword id="KW-0863">Zinc-finger</keyword>
<sequence>MLRLVSWNINGIRSPLQGVRCEEPSSCSAMAMGRILDKLDADIVCLQETKVTRDVLTEPLAIIEGYNSYFSFSRNRSGYSGVATFCKDSATPVAAEEGLSGLLSTQNGDVGCYGNMDDFTQEELRALDSEGRALLTQHKICTWEGKEKTLTLINVYCPHADPGKPERLTFKMRFYRLLQIRAEALLAAGSHVIILGDLNTAHRPIDHWDAVNMECFEEDPGRKWMDGLLSNLGCESGSHMGPFIDSYRCFQPKQKGAFTCWSTVSGARHLNYGSRLDYVLGDRTLVIDTFQSSFLLPEVMGSDHCPVGAVLSVSSVPAKQCPPLCTCFLPEFAGTQLKILRFLVHFKQDPVFKQSALQPSNQTQVHMRKNKARVRSTRSRPSKTGSSRGQKNLMSYFQPSSSGPQTSNLDLPSLGTLITPKTSEEDVMANVVEGQTKASEAKDEKEIRTSFWKSLLGGPSPMPLCGGHREPCVMRTVKKPGPNLGRHFYMCARPQGPPTDPSSRCNFFLWSRPS</sequence>
<organism>
    <name type="scientific">Bos taurus</name>
    <name type="common">Bovine</name>
    <dbReference type="NCBI Taxonomy" id="9913"/>
    <lineage>
        <taxon>Eukaryota</taxon>
        <taxon>Metazoa</taxon>
        <taxon>Chordata</taxon>
        <taxon>Craniata</taxon>
        <taxon>Vertebrata</taxon>
        <taxon>Euteleostomi</taxon>
        <taxon>Mammalia</taxon>
        <taxon>Eutheria</taxon>
        <taxon>Laurasiatheria</taxon>
        <taxon>Artiodactyla</taxon>
        <taxon>Ruminantia</taxon>
        <taxon>Pecora</taxon>
        <taxon>Bovidae</taxon>
        <taxon>Bovinae</taxon>
        <taxon>Bos</taxon>
    </lineage>
</organism>
<dbReference type="EC" id="3.1.11.2" evidence="2"/>
<dbReference type="EMBL" id="BT020881">
    <property type="protein sequence ID" value="AAX08898.1"/>
    <property type="molecule type" value="mRNA"/>
</dbReference>
<dbReference type="EMBL" id="BT021707">
    <property type="protein sequence ID" value="AAX46554.1"/>
    <property type="status" value="ALT_FRAME"/>
    <property type="molecule type" value="mRNA"/>
</dbReference>
<dbReference type="RefSeq" id="NP_001015577.1">
    <property type="nucleotide sequence ID" value="NM_001015577.1"/>
</dbReference>
<dbReference type="SMR" id="Q5E9N9"/>
<dbReference type="FunCoup" id="Q5E9N9">
    <property type="interactions" value="2342"/>
</dbReference>
<dbReference type="STRING" id="9913.ENSBTAP00000017537"/>
<dbReference type="PaxDb" id="9913-ENSBTAP00000017537"/>
<dbReference type="GeneID" id="511790"/>
<dbReference type="KEGG" id="bta:511790"/>
<dbReference type="CTD" id="27301"/>
<dbReference type="eggNOG" id="KOG1294">
    <property type="taxonomic scope" value="Eukaryota"/>
</dbReference>
<dbReference type="InParanoid" id="Q5E9N9"/>
<dbReference type="OrthoDB" id="391817at2759"/>
<dbReference type="Proteomes" id="UP000009136">
    <property type="component" value="Unplaced"/>
</dbReference>
<dbReference type="GO" id="GO:0005739">
    <property type="term" value="C:mitochondrion"/>
    <property type="evidence" value="ECO:0007669"/>
    <property type="project" value="UniProtKB-SubCell"/>
</dbReference>
<dbReference type="GO" id="GO:0005634">
    <property type="term" value="C:nucleus"/>
    <property type="evidence" value="ECO:0000318"/>
    <property type="project" value="GO_Central"/>
</dbReference>
<dbReference type="GO" id="GO:0003677">
    <property type="term" value="F:DNA binding"/>
    <property type="evidence" value="ECO:0007669"/>
    <property type="project" value="UniProtKB-KW"/>
</dbReference>
<dbReference type="GO" id="GO:0003906">
    <property type="term" value="F:DNA-(apurinic or apyrimidinic site) endonuclease activity"/>
    <property type="evidence" value="ECO:0000318"/>
    <property type="project" value="GO_Central"/>
</dbReference>
<dbReference type="GO" id="GO:0008311">
    <property type="term" value="F:double-stranded DNA 3'-5' DNA exonuclease activity"/>
    <property type="evidence" value="ECO:0000318"/>
    <property type="project" value="GO_Central"/>
</dbReference>
<dbReference type="GO" id="GO:0004519">
    <property type="term" value="F:endonuclease activity"/>
    <property type="evidence" value="ECO:0007669"/>
    <property type="project" value="UniProtKB-KW"/>
</dbReference>
<dbReference type="GO" id="GO:0008081">
    <property type="term" value="F:phosphoric diester hydrolase activity"/>
    <property type="evidence" value="ECO:0000318"/>
    <property type="project" value="GO_Central"/>
</dbReference>
<dbReference type="GO" id="GO:0008270">
    <property type="term" value="F:zinc ion binding"/>
    <property type="evidence" value="ECO:0007669"/>
    <property type="project" value="UniProtKB-KW"/>
</dbReference>
<dbReference type="GO" id="GO:0006284">
    <property type="term" value="P:base-excision repair"/>
    <property type="evidence" value="ECO:0000318"/>
    <property type="project" value="GO_Central"/>
</dbReference>
<dbReference type="GO" id="GO:0006310">
    <property type="term" value="P:DNA recombination"/>
    <property type="evidence" value="ECO:0007669"/>
    <property type="project" value="UniProtKB-KW"/>
</dbReference>
<dbReference type="CDD" id="cd09088">
    <property type="entry name" value="Ape2-like_AP-endo"/>
    <property type="match status" value="1"/>
</dbReference>
<dbReference type="FunFam" id="3.60.10.10:FF:000030">
    <property type="entry name" value="DNA-(apurinic or apyrimidinic site) lyase"/>
    <property type="match status" value="1"/>
</dbReference>
<dbReference type="Gene3D" id="3.60.10.10">
    <property type="entry name" value="Endonuclease/exonuclease/phosphatase"/>
    <property type="match status" value="1"/>
</dbReference>
<dbReference type="InterPro" id="IPR004808">
    <property type="entry name" value="AP_endonuc_1"/>
</dbReference>
<dbReference type="InterPro" id="IPR020847">
    <property type="entry name" value="AP_endonuclease_F1_BS"/>
</dbReference>
<dbReference type="InterPro" id="IPR036691">
    <property type="entry name" value="Endo/exonu/phosph_ase_sf"/>
</dbReference>
<dbReference type="InterPro" id="IPR005135">
    <property type="entry name" value="Endo/exonuclease/phosphatase"/>
</dbReference>
<dbReference type="InterPro" id="IPR010666">
    <property type="entry name" value="Znf_GRF"/>
</dbReference>
<dbReference type="NCBIfam" id="TIGR00633">
    <property type="entry name" value="xth"/>
    <property type="match status" value="1"/>
</dbReference>
<dbReference type="PANTHER" id="PTHR22748">
    <property type="entry name" value="AP ENDONUCLEASE"/>
    <property type="match status" value="1"/>
</dbReference>
<dbReference type="PANTHER" id="PTHR22748:SF27">
    <property type="entry name" value="DNA-(APURINIC OR APYRIMIDINIC SITE) ENDONUCLEASE 2"/>
    <property type="match status" value="1"/>
</dbReference>
<dbReference type="Pfam" id="PF03372">
    <property type="entry name" value="Exo_endo_phos"/>
    <property type="match status" value="1"/>
</dbReference>
<dbReference type="Pfam" id="PF06839">
    <property type="entry name" value="Zn_ribbon_GRF"/>
    <property type="match status" value="1"/>
</dbReference>
<dbReference type="SUPFAM" id="SSF56219">
    <property type="entry name" value="DNase I-like"/>
    <property type="match status" value="1"/>
</dbReference>
<dbReference type="PROSITE" id="PS00726">
    <property type="entry name" value="AP_NUCLEASE_F1_1"/>
    <property type="match status" value="1"/>
</dbReference>
<dbReference type="PROSITE" id="PS51435">
    <property type="entry name" value="AP_NUCLEASE_F1_4"/>
    <property type="match status" value="1"/>
</dbReference>
<dbReference type="PROSITE" id="PS51999">
    <property type="entry name" value="ZF_GRF"/>
    <property type="match status" value="1"/>
</dbReference>
<protein>
    <recommendedName>
        <fullName>DNA-(apurinic or apyrimidinic site) endonuclease 2</fullName>
        <ecNumber evidence="2">3.1.11.2</ecNumber>
    </recommendedName>
    <alternativeName>
        <fullName>APEX nuclease 2</fullName>
    </alternativeName>
    <alternativeName>
        <fullName>Apurinic-apyrimidinic endonuclease 2</fullName>
        <shortName>AP endonuclease 2</shortName>
    </alternativeName>
</protein>
<name>APEX2_BOVIN</name>
<accession>Q5E9N9</accession>
<accession>Q58D90</accession>
<feature type="chain" id="PRO_0000200013" description="DNA-(apurinic or apyrimidinic site) endonuclease 2">
    <location>
        <begin position="1"/>
        <end position="514"/>
    </location>
</feature>
<feature type="zinc finger region" description="GRF-type" evidence="6">
    <location>
        <begin position="465"/>
        <end position="514"/>
    </location>
</feature>
<feature type="region of interest" description="Disordered" evidence="7">
    <location>
        <begin position="359"/>
        <end position="417"/>
    </location>
</feature>
<feature type="region of interest" description="Required for the interaction and colocalization with PCNA in nuclear foci in presence of oxidative-induced DNA damaging agents" evidence="4">
    <location>
        <begin position="390"/>
        <end position="397"/>
    </location>
</feature>
<feature type="compositionally biased region" description="Basic residues" evidence="7">
    <location>
        <begin position="366"/>
        <end position="381"/>
    </location>
</feature>
<feature type="compositionally biased region" description="Polar residues" evidence="7">
    <location>
        <begin position="382"/>
        <end position="410"/>
    </location>
</feature>
<feature type="active site" evidence="2">
    <location>
        <position position="156"/>
    </location>
</feature>
<feature type="active site" description="Proton donor/acceptor" evidence="1">
    <location>
        <position position="197"/>
    </location>
</feature>
<feature type="active site" description="Proton acceptor" evidence="5">
    <location>
        <position position="304"/>
    </location>
</feature>
<feature type="binding site" evidence="5">
    <location>
        <position position="8"/>
    </location>
    <ligand>
        <name>Mg(2+)</name>
        <dbReference type="ChEBI" id="CHEBI:18420"/>
        <label>1</label>
    </ligand>
</feature>
<feature type="binding site" evidence="5">
    <location>
        <position position="48"/>
    </location>
    <ligand>
        <name>Mg(2+)</name>
        <dbReference type="ChEBI" id="CHEBI:18420"/>
        <label>1</label>
    </ligand>
</feature>
<feature type="binding site" evidence="5">
    <location>
        <position position="197"/>
    </location>
    <ligand>
        <name>Mg(2+)</name>
        <dbReference type="ChEBI" id="CHEBI:18420"/>
        <label>2</label>
    </ligand>
</feature>
<feature type="binding site" evidence="5">
    <location>
        <position position="199"/>
    </location>
    <ligand>
        <name>Mg(2+)</name>
        <dbReference type="ChEBI" id="CHEBI:18420"/>
        <label>2</label>
    </ligand>
</feature>
<feature type="binding site" evidence="5">
    <location>
        <position position="303"/>
    </location>
    <ligand>
        <name>Mg(2+)</name>
        <dbReference type="ChEBI" id="CHEBI:18420"/>
        <label>1</label>
    </ligand>
</feature>
<feature type="binding site" evidence="5">
    <location>
        <position position="304"/>
    </location>
    <ligand>
        <name>Mg(2+)</name>
        <dbReference type="ChEBI" id="CHEBI:18420"/>
        <label>2</label>
    </ligand>
</feature>
<feature type="binding site" evidence="6">
    <location>
        <position position="465"/>
    </location>
    <ligand>
        <name>Zn(2+)</name>
        <dbReference type="ChEBI" id="CHEBI:29105"/>
    </ligand>
</feature>
<feature type="binding site" evidence="6">
    <location>
        <position position="468"/>
    </location>
    <ligand>
        <name>Zn(2+)</name>
        <dbReference type="ChEBI" id="CHEBI:29105"/>
    </ligand>
</feature>
<feature type="binding site" evidence="6">
    <location>
        <position position="491"/>
    </location>
    <ligand>
        <name>Zn(2+)</name>
        <dbReference type="ChEBI" id="CHEBI:29105"/>
    </ligand>
</feature>
<feature type="binding site" evidence="6">
    <location>
        <position position="505"/>
    </location>
    <ligand>
        <name>Zn(2+)</name>
        <dbReference type="ChEBI" id="CHEBI:29105"/>
    </ligand>
</feature>
<feature type="site" description="Transition state stabilizer" evidence="2">
    <location>
        <position position="199"/>
    </location>
</feature>
<feature type="site" description="Important for catalytic activity" evidence="2">
    <location>
        <position position="277"/>
    </location>
</feature>
<feature type="site" description="Interaction with DNA substrate" evidence="2">
    <location>
        <position position="304"/>
    </location>
</feature>
<feature type="cross-link" description="Glycyl lysine isopeptide (Lys-Gly) (interchain with G-Cter in ubiquitin)" evidence="4">
    <location>
        <position position="371"/>
    </location>
</feature>
<feature type="sequence conflict" description="In Ref. 1; AAX46554." evidence="8" ref="1">
    <original>K</original>
    <variation>Q</variation>
    <location>
        <position position="369"/>
    </location>
</feature>
<evidence type="ECO:0000250" key="1"/>
<evidence type="ECO:0000250" key="2">
    <source>
        <dbReference type="UniProtKB" id="P27695"/>
    </source>
</evidence>
<evidence type="ECO:0000250" key="3">
    <source>
        <dbReference type="UniProtKB" id="Q68G58"/>
    </source>
</evidence>
<evidence type="ECO:0000250" key="4">
    <source>
        <dbReference type="UniProtKB" id="Q9UBZ4"/>
    </source>
</evidence>
<evidence type="ECO:0000255" key="5">
    <source>
        <dbReference type="PROSITE-ProRule" id="PRU00764"/>
    </source>
</evidence>
<evidence type="ECO:0000255" key="6">
    <source>
        <dbReference type="PROSITE-ProRule" id="PRU01343"/>
    </source>
</evidence>
<evidence type="ECO:0000256" key="7">
    <source>
        <dbReference type="SAM" id="MobiDB-lite"/>
    </source>
</evidence>
<evidence type="ECO:0000305" key="8"/>
<gene>
    <name type="primary">APEX2</name>
</gene>
<reference key="1">
    <citation type="journal article" date="2005" name="BMC Genomics">
        <title>Characterization of 954 bovine full-CDS cDNA sequences.</title>
        <authorList>
            <person name="Harhay G.P."/>
            <person name="Sonstegard T.S."/>
            <person name="Keele J.W."/>
            <person name="Heaton M.P."/>
            <person name="Clawson M.L."/>
            <person name="Snelling W.M."/>
            <person name="Wiedmann R.T."/>
            <person name="Van Tassell C.P."/>
            <person name="Smith T.P.L."/>
        </authorList>
    </citation>
    <scope>NUCLEOTIDE SEQUENCE [LARGE SCALE MRNA]</scope>
</reference>
<comment type="function">
    <text evidence="3 4">Functions as a weak apurinic/apyrimidinic (AP) endodeoxyribonuclease in the DNA base excision repair (BER) pathway of DNA lesions induced by oxidative and alkylating agents (By similarity). Initiates repair of AP sites in DNA by catalyzing hydrolytic incision of the phosphodiester backbone immediately adjacent to the damage, generating a single-strand break with 5'-deoxyribose phosphate and 3'-hydroxyl ends (By similarity). Also displays double-stranded DNA 3'-5' exonuclease, 3'-phosphodiesterase activities. Shows robust 3'-5' exonuclease activity on 3'-recessed heteroduplex DNA and is able to remove mismatched nucleotides preferentially (By similarity). Shows fairly strong 3'-phosphodiesterase activity involved in the removal of 3'-damaged termini formed in DNA by oxidative agents. In the nucleus functions in the PCNA-dependent BER pathway (By similarity). Plays a role in reversing blocked 3' DNA ends, problematic lesions that preclude DNA synthesis (By similarity). Required for somatic hypermutation (SHM) and DNA cleavage step of class switch recombination (CSR) of immunoglobulin genes (By similarity). Required for proper cell cycle progression during proliferation of peripheral lymphocytes (By similarity).</text>
</comment>
<comment type="catalytic activity">
    <reaction evidence="2">
        <text>Exonucleolytic cleavage in the 3'- to 5'-direction to yield nucleoside 5'-phosphates.</text>
        <dbReference type="EC" id="3.1.11.2"/>
    </reaction>
</comment>
<comment type="cofactor">
    <cofactor evidence="2">
        <name>Mg(2+)</name>
        <dbReference type="ChEBI" id="CHEBI:18420"/>
    </cofactor>
    <cofactor evidence="2">
        <name>Mn(2+)</name>
        <dbReference type="ChEBI" id="CHEBI:29035"/>
    </cofactor>
    <text evidence="2">Probably binds two magnesium or manganese ions per subunit.</text>
</comment>
<comment type="activity regulation">
    <text evidence="4">3'-5' exonuclease activity is activated by sodium and manganese (By similarity). 3'-5' exonuclease and 3'-phosphodiesterase activities are stimulated in presence of PCNA (By similarity).</text>
</comment>
<comment type="subunit">
    <text evidence="4">Interacts with PCNA; this interaction is triggered by reactive oxygen species and increased by misincorporation of uracil in nuclear DNA.</text>
</comment>
<comment type="subcellular location">
    <subcellularLocation>
        <location evidence="5">Nucleus</location>
    </subcellularLocation>
    <subcellularLocation>
        <location evidence="5">Cytoplasm</location>
    </subcellularLocation>
    <subcellularLocation>
        <location evidence="4">Mitochondrion</location>
    </subcellularLocation>
    <text evidence="4">Together with PCNA, is redistributed in discrete nuclear foci in presence of oxidative DNA damaging agents.</text>
</comment>
<comment type="PTM">
    <text evidence="4">Ubiquitinated by the CUL9-RBX1 complex. Ubiquitinated by MKRN3 at Lys-371 leading to proteasomal degradation.</text>
</comment>
<comment type="similarity">
    <text evidence="8">Belongs to the DNA repair enzymes AP/ExoA family.</text>
</comment>
<comment type="sequence caution" evidence="8">
    <conflict type="frameshift">
        <sequence resource="EMBL-CDS" id="AAX46554"/>
    </conflict>
</comment>
<proteinExistence type="evidence at transcript level"/>